<keyword id="KW-0002">3D-structure</keyword>
<keyword id="KW-0025">Alternative splicing</keyword>
<keyword id="KW-0378">Hydrolase</keyword>
<keyword id="KW-0539">Nucleus</keyword>
<keyword id="KW-0597">Phosphoprotein</keyword>
<keyword id="KW-0645">Protease</keyword>
<keyword id="KW-1267">Proteomics identification</keyword>
<keyword id="KW-1185">Reference proteome</keyword>
<keyword id="KW-0788">Thiol protease</keyword>
<proteinExistence type="evidence at protein level"/>
<name>USPL1_HUMAN</name>
<dbReference type="EC" id="3.4.22.-"/>
<dbReference type="EMBL" id="X59131">
    <property type="protein sequence ID" value="CAA41848.1"/>
    <property type="molecule type" value="mRNA"/>
</dbReference>
<dbReference type="EMBL" id="CR627370">
    <property type="protein sequence ID" value="CAH10469.1"/>
    <property type="molecule type" value="mRNA"/>
</dbReference>
<dbReference type="EMBL" id="AL138681">
    <property type="status" value="NOT_ANNOTATED_CDS"/>
    <property type="molecule type" value="Genomic_DNA"/>
</dbReference>
<dbReference type="EMBL" id="BC036027">
    <property type="protein sequence ID" value="AAH36027.1"/>
    <property type="molecule type" value="mRNA"/>
</dbReference>
<dbReference type="EMBL" id="BC038103">
    <property type="protein sequence ID" value="AAH38103.1"/>
    <property type="molecule type" value="mRNA"/>
</dbReference>
<dbReference type="CCDS" id="CCDS81760.1">
    <molecule id="Q5W0Q7-2"/>
</dbReference>
<dbReference type="CCDS" id="CCDS9336.1">
    <molecule id="Q5W0Q7-1"/>
</dbReference>
<dbReference type="PIR" id="I37273">
    <property type="entry name" value="I37273"/>
</dbReference>
<dbReference type="RefSeq" id="NP_001308461.1">
    <property type="nucleotide sequence ID" value="NM_001321532.1"/>
</dbReference>
<dbReference type="RefSeq" id="NP_001308462.1">
    <molecule id="Q5W0Q7-2"/>
    <property type="nucleotide sequence ID" value="NM_001321533.2"/>
</dbReference>
<dbReference type="RefSeq" id="NP_001308463.1">
    <molecule id="Q5W0Q7-2"/>
    <property type="nucleotide sequence ID" value="NM_001321534.2"/>
</dbReference>
<dbReference type="RefSeq" id="NP_005791.3">
    <molecule id="Q5W0Q7-1"/>
    <property type="nucleotide sequence ID" value="NM_005800.4"/>
</dbReference>
<dbReference type="RefSeq" id="XP_005266270.1">
    <property type="nucleotide sequence ID" value="XM_005266213.3"/>
</dbReference>
<dbReference type="RefSeq" id="XP_047285983.1">
    <molecule id="Q5W0Q7-1"/>
    <property type="nucleotide sequence ID" value="XM_047430027.1"/>
</dbReference>
<dbReference type="RefSeq" id="XP_047285984.1">
    <molecule id="Q5W0Q7-1"/>
    <property type="nucleotide sequence ID" value="XM_047430028.1"/>
</dbReference>
<dbReference type="PDB" id="7P99">
    <property type="method" value="X-ray"/>
    <property type="resolution" value="1.80 A"/>
    <property type="chains" value="A=213-516"/>
</dbReference>
<dbReference type="PDB" id="7ZJU">
    <property type="method" value="X-ray"/>
    <property type="resolution" value="2.17 A"/>
    <property type="chains" value="A/C=218-502"/>
</dbReference>
<dbReference type="PDB" id="7ZJV">
    <property type="method" value="X-ray"/>
    <property type="resolution" value="2.40 A"/>
    <property type="chains" value="A=218-502"/>
</dbReference>
<dbReference type="PDBsum" id="7P99"/>
<dbReference type="PDBsum" id="7ZJU"/>
<dbReference type="PDBsum" id="7ZJV"/>
<dbReference type="SMR" id="Q5W0Q7"/>
<dbReference type="BioGRID" id="115503">
    <property type="interactions" value="42"/>
</dbReference>
<dbReference type="DIP" id="DIP-47278N"/>
<dbReference type="FunCoup" id="Q5W0Q7">
    <property type="interactions" value="1803"/>
</dbReference>
<dbReference type="IntAct" id="Q5W0Q7">
    <property type="interactions" value="24"/>
</dbReference>
<dbReference type="MINT" id="Q5W0Q7"/>
<dbReference type="STRING" id="9606.ENSP00000255304"/>
<dbReference type="MEROPS" id="C98.001"/>
<dbReference type="GlyGen" id="Q5W0Q7">
    <property type="glycosylation" value="1 site, 1 O-linked glycan (1 site)"/>
</dbReference>
<dbReference type="iPTMnet" id="Q5W0Q7"/>
<dbReference type="PhosphoSitePlus" id="Q5W0Q7"/>
<dbReference type="BioMuta" id="USPL1"/>
<dbReference type="DMDM" id="74747969"/>
<dbReference type="jPOST" id="Q5W0Q7"/>
<dbReference type="MassIVE" id="Q5W0Q7"/>
<dbReference type="PaxDb" id="9606-ENSP00000255304"/>
<dbReference type="PeptideAtlas" id="Q5W0Q7"/>
<dbReference type="ProteomicsDB" id="65772">
    <molecule id="Q5W0Q7-1"/>
</dbReference>
<dbReference type="ProteomicsDB" id="65773">
    <molecule id="Q5W0Q7-2"/>
</dbReference>
<dbReference type="Antibodypedia" id="22766">
    <property type="antibodies" value="23 antibodies from 10 providers"/>
</dbReference>
<dbReference type="DNASU" id="10208"/>
<dbReference type="Ensembl" id="ENST00000255304.9">
    <molecule id="Q5W0Q7-1"/>
    <property type="protein sequence ID" value="ENSP00000255304.4"/>
    <property type="gene ID" value="ENSG00000132952.12"/>
</dbReference>
<dbReference type="Ensembl" id="ENST00000614860.1">
    <molecule id="Q5W0Q7-2"/>
    <property type="protein sequence ID" value="ENSP00000480656.1"/>
    <property type="gene ID" value="ENSG00000132952.12"/>
</dbReference>
<dbReference type="GeneID" id="10208"/>
<dbReference type="KEGG" id="hsa:10208"/>
<dbReference type="MANE-Select" id="ENST00000255304.9">
    <property type="protein sequence ID" value="ENSP00000255304.4"/>
    <property type="RefSeq nucleotide sequence ID" value="NM_005800.5"/>
    <property type="RefSeq protein sequence ID" value="NP_005791.3"/>
</dbReference>
<dbReference type="UCSC" id="uc001utc.3">
    <molecule id="Q5W0Q7-1"/>
    <property type="organism name" value="human"/>
</dbReference>
<dbReference type="AGR" id="HGNC:20294"/>
<dbReference type="CTD" id="10208"/>
<dbReference type="DisGeNET" id="10208"/>
<dbReference type="GeneCards" id="USPL1"/>
<dbReference type="HGNC" id="HGNC:20294">
    <property type="gene designation" value="USPL1"/>
</dbReference>
<dbReference type="HPA" id="ENSG00000132952">
    <property type="expression patterns" value="Low tissue specificity"/>
</dbReference>
<dbReference type="MIM" id="617470">
    <property type="type" value="gene"/>
</dbReference>
<dbReference type="neXtProt" id="NX_Q5W0Q7"/>
<dbReference type="OpenTargets" id="ENSG00000132952"/>
<dbReference type="PharmGKB" id="PA134872379"/>
<dbReference type="VEuPathDB" id="HostDB:ENSG00000132952"/>
<dbReference type="eggNOG" id="ENOG502QRFM">
    <property type="taxonomic scope" value="Eukaryota"/>
</dbReference>
<dbReference type="GeneTree" id="ENSGT00390000002316"/>
<dbReference type="HOGENOM" id="CLU_009764_0_0_1"/>
<dbReference type="InParanoid" id="Q5W0Q7"/>
<dbReference type="OMA" id="NANALCW"/>
<dbReference type="OrthoDB" id="6160353at2759"/>
<dbReference type="PAN-GO" id="Q5W0Q7">
    <property type="GO annotations" value="4 GO annotations based on evolutionary models"/>
</dbReference>
<dbReference type="PhylomeDB" id="Q5W0Q7"/>
<dbReference type="TreeFam" id="TF350670"/>
<dbReference type="BRENDA" id="3.4.22.B70">
    <property type="organism ID" value="2681"/>
</dbReference>
<dbReference type="PathwayCommons" id="Q5W0Q7"/>
<dbReference type="SignaLink" id="Q5W0Q7"/>
<dbReference type="BioGRID-ORCS" id="10208">
    <property type="hits" value="773 hits in 1160 CRISPR screens"/>
</dbReference>
<dbReference type="CD-CODE" id="6F24707C">
    <property type="entry name" value="Cajal body"/>
</dbReference>
<dbReference type="ChiTaRS" id="USPL1">
    <property type="organism name" value="human"/>
</dbReference>
<dbReference type="GenomeRNAi" id="10208"/>
<dbReference type="Pharos" id="Q5W0Q7">
    <property type="development level" value="Tbio"/>
</dbReference>
<dbReference type="PRO" id="PR:Q5W0Q7"/>
<dbReference type="Proteomes" id="UP000005640">
    <property type="component" value="Chromosome 13"/>
</dbReference>
<dbReference type="RNAct" id="Q5W0Q7">
    <property type="molecule type" value="protein"/>
</dbReference>
<dbReference type="Bgee" id="ENSG00000132952">
    <property type="expression patterns" value="Expressed in sperm and 200 other cell types or tissues"/>
</dbReference>
<dbReference type="GO" id="GO:0015030">
    <property type="term" value="C:Cajal body"/>
    <property type="evidence" value="ECO:0000314"/>
    <property type="project" value="UniProtKB"/>
</dbReference>
<dbReference type="GO" id="GO:0005615">
    <property type="term" value="C:extracellular space"/>
    <property type="evidence" value="ECO:0007005"/>
    <property type="project" value="UniProtKB"/>
</dbReference>
<dbReference type="GO" id="GO:0016929">
    <property type="term" value="F:deSUMOylase activity"/>
    <property type="evidence" value="ECO:0000314"/>
    <property type="project" value="UniProtKB"/>
</dbReference>
<dbReference type="GO" id="GO:0032183">
    <property type="term" value="F:SUMO binding"/>
    <property type="evidence" value="ECO:0000314"/>
    <property type="project" value="UniProtKB"/>
</dbReference>
<dbReference type="GO" id="GO:0030576">
    <property type="term" value="P:Cajal body organization"/>
    <property type="evidence" value="ECO:0000315"/>
    <property type="project" value="UniProtKB"/>
</dbReference>
<dbReference type="GO" id="GO:0008283">
    <property type="term" value="P:cell population proliferation"/>
    <property type="evidence" value="ECO:0000315"/>
    <property type="project" value="UniProtKB"/>
</dbReference>
<dbReference type="GO" id="GO:0016926">
    <property type="term" value="P:protein desumoylation"/>
    <property type="evidence" value="ECO:0000314"/>
    <property type="project" value="UniProtKB"/>
</dbReference>
<dbReference type="GO" id="GO:0006508">
    <property type="term" value="P:proteolysis"/>
    <property type="evidence" value="ECO:0007669"/>
    <property type="project" value="UniProtKB-KW"/>
</dbReference>
<dbReference type="GO" id="GO:0009301">
    <property type="term" value="P:snRNA transcription"/>
    <property type="evidence" value="ECO:0000315"/>
    <property type="project" value="UniProtKB"/>
</dbReference>
<dbReference type="InterPro" id="IPR029388">
    <property type="entry name" value="DUF4650"/>
</dbReference>
<dbReference type="InterPro" id="IPR038765">
    <property type="entry name" value="Papain-like_cys_pep_sf"/>
</dbReference>
<dbReference type="InterPro" id="IPR028890">
    <property type="entry name" value="Peptidase_C98"/>
</dbReference>
<dbReference type="InterPro" id="IPR028889">
    <property type="entry name" value="USP_dom"/>
</dbReference>
<dbReference type="InterPro" id="IPR033505">
    <property type="entry name" value="USPL1"/>
</dbReference>
<dbReference type="PANTHER" id="PTHR15294">
    <property type="entry name" value="RETINOVIN-RELATED"/>
    <property type="match status" value="1"/>
</dbReference>
<dbReference type="PANTHER" id="PTHR15294:SF3">
    <property type="entry name" value="SUMO-SPECIFIC ISOPEPTIDASE USPL1"/>
    <property type="match status" value="1"/>
</dbReference>
<dbReference type="Pfam" id="PF15509">
    <property type="entry name" value="DUF4650"/>
    <property type="match status" value="1"/>
</dbReference>
<dbReference type="Pfam" id="PF15499">
    <property type="entry name" value="Peptidase_C98"/>
    <property type="match status" value="1"/>
</dbReference>
<dbReference type="SUPFAM" id="SSF54001">
    <property type="entry name" value="Cysteine proteinases"/>
    <property type="match status" value="1"/>
</dbReference>
<dbReference type="PROSITE" id="PS50235">
    <property type="entry name" value="USP_3"/>
    <property type="match status" value="1"/>
</dbReference>
<gene>
    <name type="primary">USPL1</name>
    <name type="synonym">C13orf22</name>
    <name type="synonym">D13S106</name>
</gene>
<accession>Q5W0Q7</accession>
<accession>Q14109</accession>
<accession>Q6AI45</accession>
<accession>Q8IY30</accession>
<accession>Q8IYE8</accession>
<organism>
    <name type="scientific">Homo sapiens</name>
    <name type="common">Human</name>
    <dbReference type="NCBI Taxonomy" id="9606"/>
    <lineage>
        <taxon>Eukaryota</taxon>
        <taxon>Metazoa</taxon>
        <taxon>Chordata</taxon>
        <taxon>Craniata</taxon>
        <taxon>Vertebrata</taxon>
        <taxon>Euteleostomi</taxon>
        <taxon>Mammalia</taxon>
        <taxon>Eutheria</taxon>
        <taxon>Euarchontoglires</taxon>
        <taxon>Primates</taxon>
        <taxon>Haplorrhini</taxon>
        <taxon>Catarrhini</taxon>
        <taxon>Hominidae</taxon>
        <taxon>Homo</taxon>
    </lineage>
</organism>
<protein>
    <recommendedName>
        <fullName>SUMO-specific isopeptidase USPL1</fullName>
        <ecNumber>3.4.22.-</ecNumber>
    </recommendedName>
    <alternativeName>
        <fullName>Ubiquitin-specific peptidase-like protein 1</fullName>
        <shortName>USP-like 1</shortName>
    </alternativeName>
</protein>
<sequence length="1092" mass="120440">MMDSPKIGNGLPVIGPGTDIGISSLHMVGYLGKNFDSAKVPSDEYCPACREKGKLKALKTYRISFQESIFLCEDLQCIYPLGSKSLNNLISPDLEECHTPHKPQKRKSLESSYKDSLLLANSKKTRNYIAIDGGKVLNSKHNGEVYDETSSNLPDSSGQQNPIRTADSLERNEILEADTVDMATTKDPATVDVSGTGRPSPQNEGCTSKLEMPLESKCTSFPQALCVQWKNAYALCWLDCILSALVHSEELKNTVTGLCSKEESIFWRLLTKYNQANTLLYTSQLSGVKDGDCKKLTSEIFAEIETCLNEVRDEIFISLQPQLRCTLGDMESPVFAFPLLLKLETHIEKLFLYSFSWDFECSQCGHQYQNRHMKSLVTFTNVIPEWHPLNAAHFGPCNNCNSKSQIRKMVLEKVSPIFMLHFVEGLPQNDLQHYAFHFEGCLYQITSVIQYRANNHFITWILDADGSWLECDDLKGPCSERHKKFEVPASEIHIVIWERKISQVTDKEAACLPLKKTNDQHALSNEKPVSLTSCSVGDAASAETASVTHPKDISVAPRTLSQDTAVTHGDHLLSGPKGLVDNILPLTLEETIQKTASVSQLNSEAFLLENKPVAENTGILKTNTLLSQESLMASSVSAPCNEKLIQDQFVDISFPSQVVNTNMQSVQLNTEDTVNTKSVNNTDATGLIQGVKSVEIEKDAQLKQFLTPKTEQLKPERVTSQVSNLKKKETTADSQTTTSKSLQNQSLKENQKKPFVGSWVKGLISRGASFMPLCVSAHNRNTITDLQPSVKGVNNFGGFKTKGINQKASHVSKKARKSASKPPPISKPPAGPPSSNGTAAHPHAHAASEVLEKSGSTSCGAQLNHSSYGNGISSANHEDLVEGQIHKLRLKLRKKLKAEKKKLAALMSSPQSRTVRSENLEQVPQDGSPNDCESIEDLLNELPYPIDIASESACTTVPGVSLYSSQTHEEILAELLSPTPVSTELSENGEGDFRYLGMGDSHIPPPVPSEFNDVSQNTHLRQDHNYCSPTKKNPCEVQPDSLTNNACVRTLNLESPMKTDIFDEFFSSSALNALANDTLDLPHFDEYLFENY</sequence>
<feature type="chain" id="PRO_0000279526" description="SUMO-specific isopeptidase USPL1">
    <location>
        <begin position="1"/>
        <end position="1092"/>
    </location>
</feature>
<feature type="domain" description="USP">
    <location>
        <begin position="227"/>
        <end position="500"/>
    </location>
</feature>
<feature type="region of interest" description="Disordered" evidence="2">
    <location>
        <begin position="145"/>
        <end position="168"/>
    </location>
</feature>
<feature type="region of interest" description="Disordered" evidence="2">
    <location>
        <begin position="185"/>
        <end position="207"/>
    </location>
</feature>
<feature type="region of interest" description="SUMO-binding">
    <location>
        <begin position="236"/>
        <end position="495"/>
    </location>
</feature>
<feature type="region of interest" description="Disordered" evidence="2">
    <location>
        <begin position="713"/>
        <end position="749"/>
    </location>
</feature>
<feature type="region of interest" description="Disordered" evidence="2">
    <location>
        <begin position="797"/>
        <end position="859"/>
    </location>
</feature>
<feature type="region of interest" description="Disordered" evidence="2">
    <location>
        <begin position="904"/>
        <end position="930"/>
    </location>
</feature>
<feature type="compositionally biased region" description="Polar residues" evidence="2">
    <location>
        <begin position="148"/>
        <end position="163"/>
    </location>
</feature>
<feature type="compositionally biased region" description="Polar residues" evidence="2">
    <location>
        <begin position="197"/>
        <end position="206"/>
    </location>
</feature>
<feature type="compositionally biased region" description="Polar residues" evidence="2">
    <location>
        <begin position="732"/>
        <end position="748"/>
    </location>
</feature>
<feature type="compositionally biased region" description="Basic residues" evidence="2">
    <location>
        <begin position="810"/>
        <end position="819"/>
    </location>
</feature>
<feature type="compositionally biased region" description="Pro residues" evidence="2">
    <location>
        <begin position="821"/>
        <end position="832"/>
    </location>
</feature>
<feature type="active site" description="Nucleophile">
    <location>
        <position position="236"/>
    </location>
</feature>
<feature type="active site" description="Proton acceptor" evidence="1">
    <location>
        <position position="456"/>
    </location>
</feature>
<feature type="modified residue" description="Phosphoserine" evidence="8">
    <location>
        <position position="909"/>
    </location>
</feature>
<feature type="splice variant" id="VSP_023479" description="In isoform 2." evidence="6">
    <location>
        <begin position="1"/>
        <end position="329"/>
    </location>
</feature>
<feature type="sequence variant" id="VAR_030916" description="In dbSNP:rs17853512." evidence="3">
    <original>E</original>
    <variation>G</variation>
    <location>
        <position position="173"/>
    </location>
</feature>
<feature type="sequence variant" id="VAR_030917" description="In dbSNP:rs3742303.">
    <original>P</original>
    <variation>S</variation>
    <location>
        <position position="384"/>
    </location>
</feature>
<feature type="sequence variant" id="VAR_030918" description="In dbSNP:rs17609459.">
    <original>A</original>
    <variation>P</variation>
    <location>
        <position position="522"/>
    </location>
</feature>
<feature type="sequence variant" id="VAR_030919" description="In dbSNP:rs7984952." evidence="3">
    <original>L</original>
    <variation>S</variation>
    <location>
        <position position="531"/>
    </location>
</feature>
<feature type="sequence variant" id="VAR_051542" description="In dbSNP:rs41412648.">
    <original>I</original>
    <variation>V</variation>
    <location>
        <position position="583"/>
    </location>
</feature>
<feature type="sequence variant" id="VAR_030920" description="In dbSNP:rs9578190.">
    <original>S</original>
    <variation>C</variation>
    <location>
        <position position="739"/>
    </location>
</feature>
<feature type="sequence variant" id="VAR_051543" description="In dbSNP:rs35371042.">
    <original>L</original>
    <variation>I</variation>
    <location>
        <position position="786"/>
    </location>
</feature>
<feature type="sequence variant" id="VAR_030921" description="In dbSNP:rs3742302." evidence="3">
    <original>S</original>
    <variation>N</variation>
    <location>
        <position position="950"/>
    </location>
</feature>
<feature type="sequence variant" id="VAR_030922" description="In dbSNP:rs17857086." evidence="3">
    <original>T</original>
    <variation>S</variation>
    <location>
        <position position="1043"/>
    </location>
</feature>
<feature type="mutagenesis site" description="Altered SUMO-binding and SUMO-specific isopeptidase activity." evidence="4">
    <original>W</original>
    <variation>L</variation>
    <location>
        <position position="229"/>
    </location>
</feature>
<feature type="mutagenesis site" description="Abolishes the SUMO-specific isopeptidase activity." evidence="4">
    <original>C</original>
    <variation>S</variation>
    <location>
        <position position="236"/>
    </location>
</feature>
<feature type="mutagenesis site" description="Altered SUMO-binding and SUMO-specific isopeptidase activity." evidence="4">
    <original>W</original>
    <variation>F</variation>
    <location>
        <position position="237"/>
    </location>
</feature>
<feature type="mutagenesis site" description="Altered SUMO-binding and SUMO-specific isopeptidase activity." evidence="4">
    <original>LL</original>
    <variation>AA</variation>
    <location>
        <begin position="340"/>
        <end position="341"/>
    </location>
</feature>
<feature type="mutagenesis site" description="Altered SUMO-binding and SUMO-specific isopeptidase activity." evidence="4">
    <original>H</original>
    <variation>A</variation>
    <location>
        <position position="421"/>
    </location>
</feature>
<feature type="mutagenesis site" description="Loss of SUMO-binding and catalytic activity." evidence="4">
    <original>IV</original>
    <variation>AA</variation>
    <location>
        <begin position="494"/>
        <end position="495"/>
    </location>
</feature>
<feature type="turn" evidence="9">
    <location>
        <begin position="233"/>
        <end position="235"/>
    </location>
</feature>
<feature type="helix" evidence="9">
    <location>
        <begin position="236"/>
        <end position="246"/>
    </location>
</feature>
<feature type="helix" evidence="9">
    <location>
        <begin position="249"/>
        <end position="256"/>
    </location>
</feature>
<feature type="helix" evidence="9">
    <location>
        <begin position="261"/>
        <end position="263"/>
    </location>
</feature>
<feature type="helix" evidence="9">
    <location>
        <begin position="265"/>
        <end position="283"/>
    </location>
</feature>
<feature type="helix" evidence="9">
    <location>
        <begin position="297"/>
        <end position="323"/>
    </location>
</feature>
<feature type="helix" evidence="9">
    <location>
        <begin position="333"/>
        <end position="342"/>
    </location>
</feature>
<feature type="helix" evidence="9">
    <location>
        <begin position="345"/>
        <end position="348"/>
    </location>
</feature>
<feature type="turn" evidence="9">
    <location>
        <begin position="349"/>
        <end position="351"/>
    </location>
</feature>
<feature type="strand" evidence="9">
    <location>
        <begin position="353"/>
        <end position="360"/>
    </location>
</feature>
<feature type="turn" evidence="9">
    <location>
        <begin position="362"/>
        <end position="364"/>
    </location>
</feature>
<feature type="strand" evidence="9">
    <location>
        <begin position="367"/>
        <end position="375"/>
    </location>
</feature>
<feature type="strand" evidence="9">
    <location>
        <begin position="377"/>
        <end position="379"/>
    </location>
</feature>
<feature type="strand" evidence="9">
    <location>
        <begin position="390"/>
        <end position="395"/>
    </location>
</feature>
<feature type="turn" evidence="9">
    <location>
        <begin position="398"/>
        <end position="400"/>
    </location>
</feature>
<feature type="strand" evidence="9">
    <location>
        <begin position="403"/>
        <end position="413"/>
    </location>
</feature>
<feature type="strand" evidence="9">
    <location>
        <begin position="416"/>
        <end position="422"/>
    </location>
</feature>
<feature type="helix" evidence="9">
    <location>
        <begin position="431"/>
        <end position="434"/>
    </location>
</feature>
<feature type="strand" evidence="9">
    <location>
        <begin position="436"/>
        <end position="438"/>
    </location>
</feature>
<feature type="strand" evidence="9">
    <location>
        <begin position="441"/>
        <end position="452"/>
    </location>
</feature>
<feature type="turn" evidence="9">
    <location>
        <begin position="453"/>
        <end position="455"/>
    </location>
</feature>
<feature type="strand" evidence="9">
    <location>
        <begin position="456"/>
        <end position="462"/>
    </location>
</feature>
<feature type="strand" evidence="9">
    <location>
        <begin position="468"/>
        <end position="471"/>
    </location>
</feature>
<feature type="helix" evidence="10">
    <location>
        <begin position="473"/>
        <end position="475"/>
    </location>
</feature>
<feature type="strand" evidence="9">
    <location>
        <begin position="480"/>
        <end position="484"/>
    </location>
</feature>
<feature type="helix" evidence="9">
    <location>
        <begin position="489"/>
        <end position="491"/>
    </location>
</feature>
<feature type="strand" evidence="9">
    <location>
        <begin position="492"/>
        <end position="500"/>
    </location>
</feature>
<evidence type="ECO:0000250" key="1"/>
<evidence type="ECO:0000256" key="2">
    <source>
        <dbReference type="SAM" id="MobiDB-lite"/>
    </source>
</evidence>
<evidence type="ECO:0000269" key="3">
    <source>
    </source>
</evidence>
<evidence type="ECO:0000269" key="4">
    <source>
    </source>
</evidence>
<evidence type="ECO:0000269" key="5">
    <source>
    </source>
</evidence>
<evidence type="ECO:0000303" key="6">
    <source>
    </source>
</evidence>
<evidence type="ECO:0000305" key="7"/>
<evidence type="ECO:0007744" key="8">
    <source>
    </source>
</evidence>
<evidence type="ECO:0007829" key="9">
    <source>
        <dbReference type="PDB" id="7P99"/>
    </source>
</evidence>
<evidence type="ECO:0007829" key="10">
    <source>
        <dbReference type="PDB" id="7ZJU"/>
    </source>
</evidence>
<reference key="1">
    <citation type="journal article" date="1991" name="Cytogenet. Cell Genet.">
        <title>A unique intronless gene or gene segment on chromosome 13 specifying a highly charged amino acid sequence.</title>
        <authorList>
            <person name="Wilton A.N."/>
            <person name="Zehavi-Feferman T."/>
            <person name="Fleming J."/>
            <person name="Baker E."/>
            <person name="Chen L.Z."/>
            <person name="Cooper D.W."/>
        </authorList>
    </citation>
    <scope>NUCLEOTIDE SEQUENCE [MRNA] (ISOFORM 1)</scope>
    <source>
        <tissue>Melanoma</tissue>
    </source>
</reference>
<reference key="2">
    <citation type="journal article" date="2007" name="BMC Genomics">
        <title>The full-ORF clone resource of the German cDNA consortium.</title>
        <authorList>
            <person name="Bechtel S."/>
            <person name="Rosenfelder H."/>
            <person name="Duda A."/>
            <person name="Schmidt C.P."/>
            <person name="Ernst U."/>
            <person name="Wellenreuther R."/>
            <person name="Mehrle A."/>
            <person name="Schuster C."/>
            <person name="Bahr A."/>
            <person name="Bloecker H."/>
            <person name="Heubner D."/>
            <person name="Hoerlein A."/>
            <person name="Michel G."/>
            <person name="Wedler H."/>
            <person name="Koehrer K."/>
            <person name="Ottenwaelder B."/>
            <person name="Poustka A."/>
            <person name="Wiemann S."/>
            <person name="Schupp I."/>
        </authorList>
    </citation>
    <scope>NUCLEOTIDE SEQUENCE [LARGE SCALE MRNA] (ISOFORM 2)</scope>
    <source>
        <tissue>Semen</tissue>
    </source>
</reference>
<reference key="3">
    <citation type="journal article" date="2004" name="Nature">
        <title>The DNA sequence and analysis of human chromosome 13.</title>
        <authorList>
            <person name="Dunham A."/>
            <person name="Matthews L.H."/>
            <person name="Burton J."/>
            <person name="Ashurst J.L."/>
            <person name="Howe K.L."/>
            <person name="Ashcroft K.J."/>
            <person name="Beare D.M."/>
            <person name="Burford D.C."/>
            <person name="Hunt S.E."/>
            <person name="Griffiths-Jones S."/>
            <person name="Jones M.C."/>
            <person name="Keenan S.J."/>
            <person name="Oliver K."/>
            <person name="Scott C.E."/>
            <person name="Ainscough R."/>
            <person name="Almeida J.P."/>
            <person name="Ambrose K.D."/>
            <person name="Andrews D.T."/>
            <person name="Ashwell R.I.S."/>
            <person name="Babbage A.K."/>
            <person name="Bagguley C.L."/>
            <person name="Bailey J."/>
            <person name="Bannerjee R."/>
            <person name="Barlow K.F."/>
            <person name="Bates K."/>
            <person name="Beasley H."/>
            <person name="Bird C.P."/>
            <person name="Bray-Allen S."/>
            <person name="Brown A.J."/>
            <person name="Brown J.Y."/>
            <person name="Burrill W."/>
            <person name="Carder C."/>
            <person name="Carter N.P."/>
            <person name="Chapman J.C."/>
            <person name="Clamp M.E."/>
            <person name="Clark S.Y."/>
            <person name="Clarke G."/>
            <person name="Clee C.M."/>
            <person name="Clegg S.C."/>
            <person name="Cobley V."/>
            <person name="Collins J.E."/>
            <person name="Corby N."/>
            <person name="Coville G.J."/>
            <person name="Deloukas P."/>
            <person name="Dhami P."/>
            <person name="Dunham I."/>
            <person name="Dunn M."/>
            <person name="Earthrowl M.E."/>
            <person name="Ellington A.G."/>
            <person name="Faulkner L."/>
            <person name="Frankish A.G."/>
            <person name="Frankland J."/>
            <person name="French L."/>
            <person name="Garner P."/>
            <person name="Garnett J."/>
            <person name="Gilbert J.G.R."/>
            <person name="Gilson C.J."/>
            <person name="Ghori J."/>
            <person name="Grafham D.V."/>
            <person name="Gribble S.M."/>
            <person name="Griffiths C."/>
            <person name="Hall R.E."/>
            <person name="Hammond S."/>
            <person name="Harley J.L."/>
            <person name="Hart E.A."/>
            <person name="Heath P.D."/>
            <person name="Howden P.J."/>
            <person name="Huckle E.J."/>
            <person name="Hunt P.J."/>
            <person name="Hunt A.R."/>
            <person name="Johnson C."/>
            <person name="Johnson D."/>
            <person name="Kay M."/>
            <person name="Kimberley A.M."/>
            <person name="King A."/>
            <person name="Laird G.K."/>
            <person name="Langford C.J."/>
            <person name="Lawlor S."/>
            <person name="Leongamornlert D.A."/>
            <person name="Lloyd D.M."/>
            <person name="Lloyd C."/>
            <person name="Loveland J.E."/>
            <person name="Lovell J."/>
            <person name="Martin S."/>
            <person name="Mashreghi-Mohammadi M."/>
            <person name="McLaren S.J."/>
            <person name="McMurray A."/>
            <person name="Milne S."/>
            <person name="Moore M.J.F."/>
            <person name="Nickerson T."/>
            <person name="Palmer S.A."/>
            <person name="Pearce A.V."/>
            <person name="Peck A.I."/>
            <person name="Pelan S."/>
            <person name="Phillimore B."/>
            <person name="Porter K.M."/>
            <person name="Rice C.M."/>
            <person name="Searle S."/>
            <person name="Sehra H.K."/>
            <person name="Shownkeen R."/>
            <person name="Skuce C.D."/>
            <person name="Smith M."/>
            <person name="Steward C.A."/>
            <person name="Sycamore N."/>
            <person name="Tester J."/>
            <person name="Thomas D.W."/>
            <person name="Tracey A."/>
            <person name="Tromans A."/>
            <person name="Tubby B."/>
            <person name="Wall M."/>
            <person name="Wallis J.M."/>
            <person name="West A.P."/>
            <person name="Whitehead S.L."/>
            <person name="Willey D.L."/>
            <person name="Wilming L."/>
            <person name="Wray P.W."/>
            <person name="Wright M.W."/>
            <person name="Young L."/>
            <person name="Coulson A."/>
            <person name="Durbin R.M."/>
            <person name="Hubbard T."/>
            <person name="Sulston J.E."/>
            <person name="Beck S."/>
            <person name="Bentley D.R."/>
            <person name="Rogers J."/>
            <person name="Ross M.T."/>
        </authorList>
    </citation>
    <scope>NUCLEOTIDE SEQUENCE [LARGE SCALE GENOMIC DNA]</scope>
</reference>
<reference key="4">
    <citation type="journal article" date="2004" name="Genome Res.">
        <title>The status, quality, and expansion of the NIH full-length cDNA project: the Mammalian Gene Collection (MGC).</title>
        <authorList>
            <consortium name="The MGC Project Team"/>
        </authorList>
    </citation>
    <scope>NUCLEOTIDE SEQUENCE [LARGE SCALE MRNA] (ISOFORM 1)</scope>
    <scope>VARIANTS GLY-173; SER-531; ASN-950 AND SER-1043</scope>
    <source>
        <tissue>Testis</tissue>
    </source>
</reference>
<reference key="5">
    <citation type="journal article" date="2012" name="EMBO Rep.">
        <title>Ubiquitin-specific protease-like 1 (USPL1) is a SUMO isopeptidase with essential, non-catalytic functions.</title>
        <authorList>
            <person name="Schulz S."/>
            <person name="Chachami G."/>
            <person name="Kozaczkiewicz L."/>
            <person name="Winter U."/>
            <person name="Stankovic-Valentin N."/>
            <person name="Haas P."/>
            <person name="Hofmann K."/>
            <person name="Urlaub H."/>
            <person name="Ovaa H."/>
            <person name="Wittbrodt J."/>
            <person name="Meulmeester E."/>
            <person name="Melchior F."/>
        </authorList>
    </citation>
    <scope>FUNCTION IN PROTEIN DESUMOYLATION</scope>
    <scope>NON-CATALYTIC FUNCTION</scope>
    <scope>CATALYTIC ACTIVITY</scope>
    <scope>SUBCELLULAR LOCATION</scope>
    <scope>MUTAGENESIS OF TRP-229; CYS-236; TRP-237; HIS-421; 340-LEU-LEU-341 AND 494-ILE-VAL-495</scope>
</reference>
<reference key="6">
    <citation type="journal article" date="2013" name="J. Proteome Res.">
        <title>Toward a comprehensive characterization of a human cancer cell phosphoproteome.</title>
        <authorList>
            <person name="Zhou H."/>
            <person name="Di Palma S."/>
            <person name="Preisinger C."/>
            <person name="Peng M."/>
            <person name="Polat A.N."/>
            <person name="Heck A.J."/>
            <person name="Mohammed S."/>
        </authorList>
    </citation>
    <scope>PHOSPHORYLATION [LARGE SCALE ANALYSIS] AT SER-909</scope>
    <scope>IDENTIFICATION BY MASS SPECTROMETRY [LARGE SCALE ANALYSIS]</scope>
    <source>
        <tissue>Cervix carcinoma</tissue>
        <tissue>Erythroleukemia</tissue>
    </source>
</reference>
<reference key="7">
    <citation type="journal article" date="2014" name="J. Cell Sci.">
        <title>A role for the Cajal-body-associated SUMO isopeptidase USPL1 in snRNA transcription mediated by RNA polymerase II.</title>
        <authorList>
            <person name="Hutten S."/>
            <person name="Chachami G."/>
            <person name="Winter U."/>
            <person name="Melchior F."/>
            <person name="Lamond A.I."/>
        </authorList>
    </citation>
    <scope>FUNCTION IN RNAPII-MEDIATED SNRNA TRANSCRIPTION</scope>
    <scope>SUBCELLULAR LOCATION</scope>
    <scope>INTERACTION WITH ELL</scope>
</reference>
<comment type="function">
    <text evidence="4 5">SUMO-specific isopeptidase involved in protein desumoylation. Specifically binds SUMO proteins with a higher affinity for SUMO2 and SUMO3 which it cleaves more efficiently. Also able to process full-length SUMO proteins to their mature forms (PubMed:22878415). Plays a key role in RNA polymerase-II-mediated snRNA transcription in the Cajal bodies (PubMed:24413172). Is a component of complexes that can bind to U snRNA genes (PubMed:24413172).</text>
</comment>
<comment type="subunit">
    <text evidence="5">Interacts with ELL.</text>
</comment>
<comment type="interaction">
    <interactant intactId="EBI-2513899">
        <id>Q5W0Q7</id>
    </interactant>
    <interactant intactId="EBI-80140">
        <id>P63165</id>
        <label>SUMO1</label>
    </interactant>
    <organismsDiffer>false</organismsDiffer>
    <experiments>5</experiments>
</comment>
<comment type="interaction">
    <interactant intactId="EBI-2513899">
        <id>Q5W0Q7</id>
    </interactant>
    <interactant intactId="EBI-473220">
        <id>P61956</id>
        <label>SUMO2</label>
    </interactant>
    <organismsDiffer>false</organismsDiffer>
    <experiments>2</experiments>
</comment>
<comment type="interaction">
    <interactant intactId="EBI-2513899">
        <id>Q5W0Q7</id>
    </interactant>
    <interactant intactId="EBI-474067">
        <id>P55854</id>
        <label>SUMO3</label>
    </interactant>
    <organismsDiffer>false</organismsDiffer>
    <experiments>17</experiments>
</comment>
<comment type="subcellular location">
    <subcellularLocation>
        <location evidence="4 5">Nucleus</location>
        <location evidence="4 5">Cajal body</location>
    </subcellularLocation>
</comment>
<comment type="alternative products">
    <event type="alternative splicing"/>
    <isoform>
        <id>Q5W0Q7-1</id>
        <name>1</name>
        <sequence type="displayed"/>
    </isoform>
    <isoform>
        <id>Q5W0Q7-2</id>
        <name>2</name>
        <sequence type="described" ref="VSP_023479"/>
    </isoform>
</comment>
<comment type="similarity">
    <text evidence="7">Belongs to the peptidase C19 family.</text>
</comment>